<sequence>MTEQPPPGGSYPPPPPPPGPSGGHEPPPAAPPGGSGYAPPPPPSSGSGYPPPPPPPGGGAYPPPPPSAGGYAPPPPGPAIRTMPTESYTPWITRVLAAFIDWAPYVVLVGIGWVIMLVTQTSSCVTSISEYDVGQFCVSQPSMIGQLVQWLLSVGGLAYLVWNYGYRQGTIGSSIGKSVLKFKVVSETTGQPIGFGMSVVRQLAHFIDAIICFVGFLFPLWDAKRQTLADKIMTTVCVPI</sequence>
<reference key="1">
    <citation type="journal article" date="1998" name="Nature">
        <title>Deciphering the biology of Mycobacterium tuberculosis from the complete genome sequence.</title>
        <authorList>
            <person name="Cole S.T."/>
            <person name="Brosch R."/>
            <person name="Parkhill J."/>
            <person name="Garnier T."/>
            <person name="Churcher C.M."/>
            <person name="Harris D.E."/>
            <person name="Gordon S.V."/>
            <person name="Eiglmeier K."/>
            <person name="Gas S."/>
            <person name="Barry C.E. III"/>
            <person name="Tekaia F."/>
            <person name="Badcock K."/>
            <person name="Basham D."/>
            <person name="Brown D."/>
            <person name="Chillingworth T."/>
            <person name="Connor R."/>
            <person name="Davies R.M."/>
            <person name="Devlin K."/>
            <person name="Feltwell T."/>
            <person name="Gentles S."/>
            <person name="Hamlin N."/>
            <person name="Holroyd S."/>
            <person name="Hornsby T."/>
            <person name="Jagels K."/>
            <person name="Krogh A."/>
            <person name="McLean J."/>
            <person name="Moule S."/>
            <person name="Murphy L.D."/>
            <person name="Oliver S."/>
            <person name="Osborne J."/>
            <person name="Quail M.A."/>
            <person name="Rajandream M.A."/>
            <person name="Rogers J."/>
            <person name="Rutter S."/>
            <person name="Seeger K."/>
            <person name="Skelton S."/>
            <person name="Squares S."/>
            <person name="Squares R."/>
            <person name="Sulston J.E."/>
            <person name="Taylor K."/>
            <person name="Whitehead S."/>
            <person name="Barrell B.G."/>
        </authorList>
    </citation>
    <scope>NUCLEOTIDE SEQUENCE [LARGE SCALE GENOMIC DNA]</scope>
    <source>
        <strain>ATCC 25618 / H37Rv</strain>
    </source>
</reference>
<reference key="2">
    <citation type="journal article" date="2022" name="Genomics">
        <title>Deep N-terminomics of Mycobacterium tuberculosis H37Rv extensively correct annotated encoding genes.</title>
        <authorList>
            <person name="Shi J."/>
            <person name="Meng S."/>
            <person name="Wan L."/>
            <person name="Zhang Z."/>
            <person name="Jiang S."/>
            <person name="Zhu H."/>
            <person name="Dai E."/>
            <person name="Chang L."/>
            <person name="Gao H."/>
            <person name="Wan K."/>
            <person name="Zhang L."/>
            <person name="Zhao X."/>
            <person name="Liu H."/>
            <person name="Lyu Z."/>
            <person name="Zhang Y."/>
            <person name="Xu P."/>
        </authorList>
    </citation>
    <scope>PROTEIN SEQUENCE OF 82-94; 166-178; 182-201 AND 225-240</scope>
    <source>
        <strain>H37Rv</strain>
    </source>
</reference>
<reference key="3">
    <citation type="journal article" date="2008" name="BMC Syst. Biol.">
        <title>targetTB: a target identification pipeline for Mycobacterium tuberculosis through an interactome, reactome and genome-scale structural analysis.</title>
        <authorList>
            <person name="Raman K."/>
            <person name="Yeturu K."/>
            <person name="Chandra N."/>
        </authorList>
    </citation>
    <scope>IDENTIFICATION AS A DRUG TARGET [LARGE SCALE ANALYSIS]</scope>
</reference>
<reference key="4">
    <citation type="journal article" date="2011" name="Mol. Cell. Proteomics">
        <title>Proteogenomic analysis of Mycobacterium tuberculosis by high resolution mass spectrometry.</title>
        <authorList>
            <person name="Kelkar D.S."/>
            <person name="Kumar D."/>
            <person name="Kumar P."/>
            <person name="Balakrishnan L."/>
            <person name="Muthusamy B."/>
            <person name="Yadav A.K."/>
            <person name="Shrivastava P."/>
            <person name="Marimuthu A."/>
            <person name="Anand S."/>
            <person name="Sundaram H."/>
            <person name="Kingsbury R."/>
            <person name="Harsha H.C."/>
            <person name="Nair B."/>
            <person name="Prasad T.S."/>
            <person name="Chauhan D.S."/>
            <person name="Katoch K."/>
            <person name="Katoch V.M."/>
            <person name="Kumar P."/>
            <person name="Chaerkady R."/>
            <person name="Ramachandran S."/>
            <person name="Dash D."/>
            <person name="Pandey A."/>
        </authorList>
    </citation>
    <scope>IDENTIFICATION BY MASS SPECTROMETRY [LARGE SCALE ANALYSIS]</scope>
    <source>
        <strain>ATCC 25618 / H37Rv</strain>
    </source>
</reference>
<keyword id="KW-1003">Cell membrane</keyword>
<keyword id="KW-0903">Direct protein sequencing</keyword>
<keyword id="KW-0472">Membrane</keyword>
<keyword id="KW-1185">Reference proteome</keyword>
<keyword id="KW-0677">Repeat</keyword>
<keyword id="KW-0812">Transmembrane</keyword>
<keyword id="KW-1133">Transmembrane helix</keyword>
<dbReference type="EMBL" id="AL123456">
    <property type="protein sequence ID" value="CCP43829.1"/>
    <property type="molecule type" value="Genomic_DNA"/>
</dbReference>
<dbReference type="PIR" id="D70894">
    <property type="entry name" value="D70894"/>
</dbReference>
<dbReference type="RefSeq" id="NP_215594.1">
    <property type="nucleotide sequence ID" value="NC_000962.3"/>
</dbReference>
<dbReference type="RefSeq" id="WP_003901991.1">
    <property type="nucleotide sequence ID" value="NZ_KK339370.1"/>
</dbReference>
<dbReference type="STRING" id="83332.Rv1078"/>
<dbReference type="PaxDb" id="83332-Rv1078"/>
<dbReference type="DNASU" id="887111"/>
<dbReference type="GeneID" id="887111"/>
<dbReference type="KEGG" id="mtu:Rv1078"/>
<dbReference type="KEGG" id="mtv:RVBD_1078"/>
<dbReference type="TubercuList" id="Rv1078"/>
<dbReference type="eggNOG" id="COG1714">
    <property type="taxonomic scope" value="Bacteria"/>
</dbReference>
<dbReference type="InParanoid" id="P9WIM7"/>
<dbReference type="OrthoDB" id="9793824at2"/>
<dbReference type="Proteomes" id="UP000001584">
    <property type="component" value="Chromosome"/>
</dbReference>
<dbReference type="GO" id="GO:0005576">
    <property type="term" value="C:extracellular region"/>
    <property type="evidence" value="ECO:0007005"/>
    <property type="project" value="MTBBASE"/>
</dbReference>
<dbReference type="GO" id="GO:0009274">
    <property type="term" value="C:peptidoglycan-based cell wall"/>
    <property type="evidence" value="ECO:0007005"/>
    <property type="project" value="MTBBASE"/>
</dbReference>
<dbReference type="GO" id="GO:0005886">
    <property type="term" value="C:plasma membrane"/>
    <property type="evidence" value="ECO:0007005"/>
    <property type="project" value="MTBBASE"/>
</dbReference>
<dbReference type="InterPro" id="IPR051791">
    <property type="entry name" value="Pra-immunoreactive"/>
</dbReference>
<dbReference type="InterPro" id="IPR010432">
    <property type="entry name" value="RDD"/>
</dbReference>
<dbReference type="PANTHER" id="PTHR36115:SF6">
    <property type="entry name" value="PROLINE-RICH ANTIGEN HOMOLOG"/>
    <property type="match status" value="1"/>
</dbReference>
<dbReference type="PANTHER" id="PTHR36115">
    <property type="entry name" value="PROLINE-RICH ANTIGEN HOMOLOG-RELATED"/>
    <property type="match status" value="1"/>
</dbReference>
<dbReference type="Pfam" id="PF06271">
    <property type="entry name" value="RDD"/>
    <property type="match status" value="1"/>
</dbReference>
<proteinExistence type="evidence at protein level"/>
<gene>
    <name evidence="1" type="primary">pra</name>
    <name type="ordered locus">Rv1078</name>
    <name type="ORF">MTV017.31</name>
</gene>
<comment type="subcellular location">
    <subcellularLocation>
        <location evidence="4">Cell membrane</location>
        <topology evidence="2">Multi-pass membrane protein</topology>
    </subcellularLocation>
</comment>
<comment type="miscellaneous">
    <text>Was identified as a high-confidence drug target.</text>
</comment>
<comment type="similarity">
    <text evidence="4">Belongs to the mycobacterial Pra family.</text>
</comment>
<organism>
    <name type="scientific">Mycobacterium tuberculosis (strain ATCC 25618 / H37Rv)</name>
    <dbReference type="NCBI Taxonomy" id="83332"/>
    <lineage>
        <taxon>Bacteria</taxon>
        <taxon>Bacillati</taxon>
        <taxon>Actinomycetota</taxon>
        <taxon>Actinomycetes</taxon>
        <taxon>Mycobacteriales</taxon>
        <taxon>Mycobacteriaceae</taxon>
        <taxon>Mycobacterium</taxon>
        <taxon>Mycobacterium tuberculosis complex</taxon>
    </lineage>
</organism>
<accession>P9WIM7</accession>
<accession>L0T785</accession>
<accession>O53426</accession>
<name>PRA_MYCTU</name>
<evidence type="ECO:0000250" key="1">
    <source>
        <dbReference type="UniProtKB" id="P41484"/>
    </source>
</evidence>
<evidence type="ECO:0000255" key="2"/>
<evidence type="ECO:0000256" key="3">
    <source>
        <dbReference type="SAM" id="MobiDB-lite"/>
    </source>
</evidence>
<evidence type="ECO:0000305" key="4"/>
<protein>
    <recommendedName>
        <fullName evidence="1">Proline-rich antigen homolog</fullName>
        <shortName evidence="1">Pra</shortName>
    </recommendedName>
</protein>
<feature type="chain" id="PRO_0000058567" description="Proline-rich antigen homolog">
    <location>
        <begin position="1"/>
        <end position="240"/>
    </location>
</feature>
<feature type="transmembrane region" description="Helical" evidence="2">
    <location>
        <begin position="98"/>
        <end position="118"/>
    </location>
</feature>
<feature type="transmembrane region" description="Helical" evidence="2">
    <location>
        <begin position="142"/>
        <end position="162"/>
    </location>
</feature>
<feature type="transmembrane region" description="Helical" evidence="2">
    <location>
        <begin position="203"/>
        <end position="223"/>
    </location>
</feature>
<feature type="domain" description="RDD" evidence="2">
    <location>
        <begin position="89"/>
        <end position="233"/>
    </location>
</feature>
<feature type="region of interest" description="Disordered" evidence="3">
    <location>
        <begin position="1"/>
        <end position="78"/>
    </location>
</feature>
<feature type="compositionally biased region" description="Pro residues" evidence="3">
    <location>
        <begin position="1"/>
        <end position="31"/>
    </location>
</feature>
<feature type="compositionally biased region" description="Pro residues" evidence="3">
    <location>
        <begin position="38"/>
        <end position="78"/>
    </location>
</feature>